<gene>
    <name evidence="5" type="primary">Pin</name>
</gene>
<feature type="transit peptide" description="Chloroplast" evidence="3">
    <location>
        <begin position="1"/>
        <end position="46"/>
    </location>
</feature>
<feature type="chain" id="PRO_0000454950" description="Alpha pinene synthase, chloroplastic">
    <location>
        <begin position="47"/>
        <end position="628"/>
    </location>
</feature>
<feature type="short sequence motif" description="DDXXD motif" evidence="1">
    <location>
        <begin position="381"/>
        <end position="385"/>
    </location>
</feature>
<feature type="binding site" evidence="2">
    <location>
        <position position="381"/>
    </location>
    <ligand>
        <name>Mg(2+)</name>
        <dbReference type="ChEBI" id="CHEBI:18420"/>
        <label>1</label>
    </ligand>
</feature>
<feature type="binding site" evidence="2">
    <location>
        <position position="381"/>
    </location>
    <ligand>
        <name>Mg(2+)</name>
        <dbReference type="ChEBI" id="CHEBI:18420"/>
        <label>2</label>
    </ligand>
</feature>
<feature type="binding site" evidence="2">
    <location>
        <position position="385"/>
    </location>
    <ligand>
        <name>Mg(2+)</name>
        <dbReference type="ChEBI" id="CHEBI:18420"/>
        <label>1</label>
    </ligand>
</feature>
<feature type="binding site" evidence="2">
    <location>
        <position position="385"/>
    </location>
    <ligand>
        <name>Mg(2+)</name>
        <dbReference type="ChEBI" id="CHEBI:18420"/>
        <label>2</label>
    </ligand>
</feature>
<feature type="binding site" evidence="2">
    <location>
        <position position="532"/>
    </location>
    <ligand>
        <name>Mg(2+)</name>
        <dbReference type="ChEBI" id="CHEBI:18420"/>
        <label>3</label>
    </ligand>
</feature>
<keyword id="KW-0150">Chloroplast</keyword>
<keyword id="KW-0456">Lyase</keyword>
<keyword id="KW-0460">Magnesium</keyword>
<keyword id="KW-0479">Metal-binding</keyword>
<keyword id="KW-0934">Plastid</keyword>
<keyword id="KW-0809">Transit peptide</keyword>
<reference key="1">
    <citation type="journal article" date="2009" name="Holzforschung">
        <title>Cloning and characterization of alpha-pinene synthase from Chamaecyparis formosensis Matsum.</title>
        <authorList>
            <person name="Chu F.-H."/>
            <person name="Kuo P.-M."/>
            <person name="Chen Y.-R."/>
            <person name="Wang S.-Y."/>
        </authorList>
    </citation>
    <scope>NUCLEOTIDE SEQUENCE [MRNA]</scope>
    <scope>FUNCTION</scope>
    <scope>CATALYTIC ACTIVITY</scope>
    <scope>PATHWAY</scope>
</reference>
<comment type="function">
    <text evidence="4">Monoterpene synthase involved in the biosynthesis of volatile compounds (Ref.1). Mediates the conversion of (2E)-geranyl diphosphate (GPP) into alpha-pinene (Ref.1).</text>
</comment>
<comment type="catalytic activity">
    <reaction evidence="4">
        <text>(2E)-geranyl diphosphate = alpha-pinene + diphosphate</text>
        <dbReference type="Rhea" id="RHEA:25662"/>
        <dbReference type="ChEBI" id="CHEBI:33019"/>
        <dbReference type="ChEBI" id="CHEBI:36740"/>
        <dbReference type="ChEBI" id="CHEBI:58057"/>
    </reaction>
    <physiologicalReaction direction="left-to-right" evidence="4">
        <dbReference type="Rhea" id="RHEA:25663"/>
    </physiologicalReaction>
</comment>
<comment type="cofactor">
    <cofactor evidence="1">
        <name>Mg(2+)</name>
        <dbReference type="ChEBI" id="CHEBI:18420"/>
    </cofactor>
    <cofactor evidence="1">
        <name>Mn(2+)</name>
        <dbReference type="ChEBI" id="CHEBI:29035"/>
    </cofactor>
    <text evidence="1">Binds 3 Mg(2+) or Mn(2+) ions per subunit.</text>
</comment>
<comment type="pathway">
    <text evidence="4">Secondary metabolite biosynthesis; terpenoid biosynthesis.</text>
</comment>
<comment type="subcellular location">
    <subcellularLocation>
        <location evidence="3">Plastid</location>
        <location evidence="3">Chloroplast</location>
    </subcellularLocation>
</comment>
<comment type="domain">
    <text evidence="2">The Asp-Asp-Xaa-Xaa-Asp/Glu (DDXXD/E) motif is important for the catalytic activity, presumably through binding to Mg(2+).</text>
</comment>
<comment type="similarity">
    <text evidence="6">Belongs to the terpene synthase family. Tpsa subfamily.</text>
</comment>
<dbReference type="EC" id="4.2.3.-" evidence="4"/>
<dbReference type="EMBL" id="EU099434">
    <property type="protein sequence ID" value="ABW80964.1"/>
    <property type="molecule type" value="mRNA"/>
</dbReference>
<dbReference type="SMR" id="C3RSF5"/>
<dbReference type="UniPathway" id="UPA00213"/>
<dbReference type="GO" id="GO:0009507">
    <property type="term" value="C:chloroplast"/>
    <property type="evidence" value="ECO:0007669"/>
    <property type="project" value="UniProtKB-SubCell"/>
</dbReference>
<dbReference type="GO" id="GO:0000287">
    <property type="term" value="F:magnesium ion binding"/>
    <property type="evidence" value="ECO:0007669"/>
    <property type="project" value="InterPro"/>
</dbReference>
<dbReference type="GO" id="GO:0010333">
    <property type="term" value="F:terpene synthase activity"/>
    <property type="evidence" value="ECO:0000314"/>
    <property type="project" value="UniProtKB"/>
</dbReference>
<dbReference type="GO" id="GO:0046248">
    <property type="term" value="P:alpha-pinene biosynthetic process"/>
    <property type="evidence" value="ECO:0000314"/>
    <property type="project" value="UniProtKB"/>
</dbReference>
<dbReference type="GO" id="GO:0016102">
    <property type="term" value="P:diterpenoid biosynthetic process"/>
    <property type="evidence" value="ECO:0007669"/>
    <property type="project" value="InterPro"/>
</dbReference>
<dbReference type="GO" id="GO:0010597">
    <property type="term" value="P:green leaf volatile biosynthetic process"/>
    <property type="evidence" value="ECO:0000314"/>
    <property type="project" value="UniProtKB"/>
</dbReference>
<dbReference type="GO" id="GO:0016099">
    <property type="term" value="P:monoterpenoid biosynthetic process"/>
    <property type="evidence" value="ECO:0000314"/>
    <property type="project" value="UniProtKB"/>
</dbReference>
<dbReference type="CDD" id="cd00684">
    <property type="entry name" value="Terpene_cyclase_plant_C1"/>
    <property type="match status" value="1"/>
</dbReference>
<dbReference type="FunFam" id="1.50.10.130:FF:000002">
    <property type="entry name" value="Ent-copalyl diphosphate synthase, chloroplastic"/>
    <property type="match status" value="1"/>
</dbReference>
<dbReference type="FunFam" id="1.10.600.10:FF:000005">
    <property type="entry name" value="Ent-kaur-16-ene synthase, chloroplastic"/>
    <property type="match status" value="1"/>
</dbReference>
<dbReference type="Gene3D" id="1.10.600.10">
    <property type="entry name" value="Farnesyl Diphosphate Synthase"/>
    <property type="match status" value="1"/>
</dbReference>
<dbReference type="Gene3D" id="1.50.10.130">
    <property type="entry name" value="Terpene synthase, N-terminal domain"/>
    <property type="match status" value="1"/>
</dbReference>
<dbReference type="InterPro" id="IPR008949">
    <property type="entry name" value="Isoprenoid_synthase_dom_sf"/>
</dbReference>
<dbReference type="InterPro" id="IPR034741">
    <property type="entry name" value="Terpene_cyclase-like_1_C"/>
</dbReference>
<dbReference type="InterPro" id="IPR044814">
    <property type="entry name" value="Terpene_cyclase_plant_C1"/>
</dbReference>
<dbReference type="InterPro" id="IPR001906">
    <property type="entry name" value="Terpene_synth_N"/>
</dbReference>
<dbReference type="InterPro" id="IPR036965">
    <property type="entry name" value="Terpene_synth_N_sf"/>
</dbReference>
<dbReference type="InterPro" id="IPR050148">
    <property type="entry name" value="Terpene_synthase-like"/>
</dbReference>
<dbReference type="InterPro" id="IPR005630">
    <property type="entry name" value="Terpene_synthase_metal-bd"/>
</dbReference>
<dbReference type="InterPro" id="IPR008930">
    <property type="entry name" value="Terpenoid_cyclase/PrenylTrfase"/>
</dbReference>
<dbReference type="PANTHER" id="PTHR31225">
    <property type="entry name" value="OS04G0344100 PROTEIN-RELATED"/>
    <property type="match status" value="1"/>
</dbReference>
<dbReference type="Pfam" id="PF01397">
    <property type="entry name" value="Terpene_synth"/>
    <property type="match status" value="1"/>
</dbReference>
<dbReference type="Pfam" id="PF03936">
    <property type="entry name" value="Terpene_synth_C"/>
    <property type="match status" value="1"/>
</dbReference>
<dbReference type="SFLD" id="SFLDS00005">
    <property type="entry name" value="Isoprenoid_Synthase_Type_I"/>
    <property type="match status" value="1"/>
</dbReference>
<dbReference type="SFLD" id="SFLDG01019">
    <property type="entry name" value="Terpene_Cyclase_Like_1_C_Termi"/>
    <property type="match status" value="1"/>
</dbReference>
<dbReference type="SFLD" id="SFLDG01014">
    <property type="entry name" value="Terpene_Cyclase_Like_1_N-term"/>
    <property type="match status" value="1"/>
</dbReference>
<dbReference type="SUPFAM" id="SSF48239">
    <property type="entry name" value="Terpenoid cyclases/Protein prenyltransferases"/>
    <property type="match status" value="1"/>
</dbReference>
<dbReference type="SUPFAM" id="SSF48576">
    <property type="entry name" value="Terpenoid synthases"/>
    <property type="match status" value="1"/>
</dbReference>
<evidence type="ECO:0000250" key="1">
    <source>
        <dbReference type="UniProtKB" id="A0A1C9J6A7"/>
    </source>
</evidence>
<evidence type="ECO:0000250" key="2">
    <source>
        <dbReference type="UniProtKB" id="Q40577"/>
    </source>
</evidence>
<evidence type="ECO:0000255" key="3"/>
<evidence type="ECO:0000269" key="4">
    <source ref="1"/>
</evidence>
<evidence type="ECO:0000303" key="5">
    <source ref="1"/>
</evidence>
<evidence type="ECO:0000305" key="6"/>
<sequence>MSLGCITPLASAMVGPKLVRPLIHHNPLFHHKPLNRPYLQTKIPLRSRVAQNPINMALITTDEGITRRIGNHHPNLWDDDFIQSLSKAYEAPSYGERAEKLIKDVRDMFNALPLHSSSADDLIQHLSLVDSVERLGIDRHFQNEIKTALDYVYRYWSDAGIGCGRESTHADLNTTALGFRILRLHRYSVSSDVLQQFVLRDGPFLDSNNQPNEDDIKNILNLFRGSLIAFPGENVLDDAKSFTMTYLKQVLPKISNLNLSREIKFNLEYGWHTNVPRLEARTYIDIYGEDSSWASKSINNIFYTKLLELAKLDFNIIQSLQQQELQILSRWWMESDLGKLDFARHRHVEYYLWAATGCIEPKYSAFRIGFAKLSALVTYLDDMYDTYDFDEIKIFTKAIKRWDASIIKGLPEFMKVAFKAFDEAVKDMAQEAKKTQGRDTLDYARKAWEVYIDAYMKEAEWLATGYMPSLEEYLENGKVSAGSRVVTLQPILSLDVPLSDDILKEIDYPSRFDELLCLTLRLRGDTRTFKAEADRGEVVSCITCYMKDHPGSNEEDALNYLNSLIDERLKELNWEYLKTDNVPIISKGNAYNLSKGLQLLYKERDGFTVFSIETKNFIYRMMIGSIPI</sequence>
<organism>
    <name type="scientific">Chamaecyparis formosensis</name>
    <name type="common">Formosan cypress</name>
    <name type="synonym">Cupressus formosensis</name>
    <dbReference type="NCBI Taxonomy" id="187461"/>
    <lineage>
        <taxon>Eukaryota</taxon>
        <taxon>Viridiplantae</taxon>
        <taxon>Streptophyta</taxon>
        <taxon>Embryophyta</taxon>
        <taxon>Tracheophyta</taxon>
        <taxon>Spermatophyta</taxon>
        <taxon>Pinopsida</taxon>
        <taxon>Pinidae</taxon>
        <taxon>Conifers II</taxon>
        <taxon>Cupressales</taxon>
        <taxon>Cupressaceae</taxon>
        <taxon>Chamaecyparis</taxon>
    </lineage>
</organism>
<name>PIN_CHAFM</name>
<proteinExistence type="evidence at protein level"/>
<accession>C3RSF5</accession>
<protein>
    <recommendedName>
        <fullName evidence="5">Alpha pinene synthase, chloroplastic</fullName>
        <shortName evidence="5">Cf-Pin</shortName>
        <ecNumber evidence="4">4.2.3.-</ecNumber>
    </recommendedName>
</protein>